<accession>Q9Z204</accession>
<accession>Q3TLB5</accession>
<accession>Q501Q3</accession>
<accession>Q8C2G5</accession>
<accession>Q99KE2</accession>
<accession>Q9CQT3</accession>
<accession>Q9CY83</accession>
<comment type="function">
    <text evidence="1">Binds pre-mRNA and nucleates the assembly of 40S hnRNP particles. Interacts with poly-U tracts in the 3'-UTR or 5'-UTR of mRNA and modulates the stability and the level of translation of bound mRNA molecules. Single HNRNPC tetramers bind 230-240 nucleotides. Trimers of HNRNPC tetramers bind 700 nucleotides. May play a role in the early steps of spliceosome assembly and pre-mRNA splicing. N6-methyladenosine (m6A) has been shown to alter the local structure in mRNAs and long non-coding RNAs (lncRNAs) via a mechanism named 'm(6)A-switch', facilitating binding of HNRNPC, leading to regulation of mRNA splicing.</text>
</comment>
<comment type="subunit">
    <text evidence="1">Tetramer composed of 3 copies of isoform C1 and 1 copy of isoform C2. Assembly of 3 tetramers with bound pre-mRNA gives rise to a 19S complex that interacts with HNRNPA2B1 tetramers. Component of the 40S hnRNP particle. Identified in the spliceosome C complex. Interacts with IGF2BP1. Interacts with DHX9; this interaction is direct, enhanced probably by their concomitant binding to RNA and mediates the attachment to actin filaments (By similarity). Interacts with PPIA/CYPA (By similarity).</text>
</comment>
<comment type="subcellular location">
    <subcellularLocation>
        <location evidence="1">Nucleus</location>
    </subcellularLocation>
    <text evidence="1">Component of ribonucleosomes.</text>
</comment>
<comment type="alternative products">
    <event type="alternative splicing"/>
    <isoform>
        <id>Q9Z204-1</id>
        <name>C2</name>
        <sequence type="displayed"/>
    </isoform>
    <isoform>
        <id>Q9Z204-2</id>
        <name>C1</name>
        <sequence type="described" ref="VSP_005832"/>
    </isoform>
    <isoform>
        <id>Q9Z204-3</id>
        <name>3</name>
        <sequence type="described" ref="VSP_005832 VSP_005833"/>
    </isoform>
    <isoform>
        <id>Q9Z204-4</id>
        <name>4</name>
        <sequence type="described" ref="VSP_005832 VSP_019227"/>
    </isoform>
    <isoform>
        <id>Q9Z204-5</id>
        <name>5</name>
        <sequence type="described" ref="VSP_005833"/>
    </isoform>
</comment>
<comment type="PTM">
    <text evidence="1">Phosphorylated on Ser-268 and Ser-306 in resting cells.</text>
</comment>
<comment type="PTM">
    <text evidence="1">Sumoylated. Sumoylation reduces affinity for mRNA.</text>
</comment>
<comment type="PTM">
    <text evidence="1">Ubiquitinated and degraded after nucleo-cytoplasmic transport by YWHAE.</text>
</comment>
<comment type="similarity">
    <text evidence="7">Belongs to the RRM HNRPC family. RALY subfamily.</text>
</comment>
<proteinExistence type="evidence at protein level"/>
<feature type="initiator methionine" description="Removed" evidence="1">
    <location>
        <position position="1"/>
    </location>
</feature>
<feature type="chain" id="PRO_0000081845" description="Heterogeneous nuclear ribonucleoproteins C1/C2">
    <location>
        <begin position="2"/>
        <end position="313"/>
    </location>
</feature>
<feature type="domain" description="RRM" evidence="3">
    <location>
        <begin position="16"/>
        <end position="87"/>
    </location>
</feature>
<feature type="region of interest" description="Disordered" evidence="4">
    <location>
        <begin position="139"/>
        <end position="191"/>
    </location>
</feature>
<feature type="region of interest" description="Disordered" evidence="4">
    <location>
        <begin position="219"/>
        <end position="313"/>
    </location>
</feature>
<feature type="coiled-coil region" evidence="2">
    <location>
        <begin position="191"/>
        <end position="226"/>
    </location>
</feature>
<feature type="short sequence motif" description="Nuclear localization signal" evidence="2">
    <location>
        <begin position="155"/>
        <end position="161"/>
    </location>
</feature>
<feature type="compositionally biased region" description="Low complexity" evidence="4">
    <location>
        <begin position="175"/>
        <end position="186"/>
    </location>
</feature>
<feature type="compositionally biased region" description="Basic and acidic residues" evidence="4">
    <location>
        <begin position="250"/>
        <end position="261"/>
    </location>
</feature>
<feature type="compositionally biased region" description="Acidic residues" evidence="4">
    <location>
        <begin position="263"/>
        <end position="284"/>
    </location>
</feature>
<feature type="compositionally biased region" description="Basic and acidic residues" evidence="4">
    <location>
        <begin position="285"/>
        <end position="294"/>
    </location>
</feature>
<feature type="compositionally biased region" description="Acidic residues" evidence="4">
    <location>
        <begin position="295"/>
        <end position="313"/>
    </location>
</feature>
<feature type="modified residue" description="N-acetylalanine" evidence="1">
    <location>
        <position position="2"/>
    </location>
</feature>
<feature type="modified residue" description="Phosphoserine" evidence="1">
    <location>
        <position position="113"/>
    </location>
</feature>
<feature type="modified residue" description="Phosphoserine" evidence="1">
    <location>
        <position position="115"/>
    </location>
</feature>
<feature type="modified residue" description="Phosphoserine" evidence="11">
    <location>
        <position position="121"/>
    </location>
</feature>
<feature type="modified residue" description="Phosphoserine" evidence="1">
    <location>
        <position position="162"/>
    </location>
</feature>
<feature type="modified residue" description="Phosphoserine" evidence="1">
    <location>
        <position position="166"/>
    </location>
</feature>
<feature type="modified residue" description="N6-acetyllysine; alternate" evidence="12">
    <location>
        <position position="176"/>
    </location>
</feature>
<feature type="modified residue" description="Phosphoserine" evidence="11">
    <location>
        <position position="229"/>
    </location>
</feature>
<feature type="modified residue" description="Phosphoserine" evidence="9">
    <location>
        <position position="231"/>
    </location>
</feature>
<feature type="modified residue" description="Phosphoserine" evidence="11">
    <location>
        <position position="232"/>
    </location>
</feature>
<feature type="modified residue" description="Phosphoserine" evidence="10 11">
    <location>
        <position position="241"/>
    </location>
</feature>
<feature type="modified residue" description="Phosphoserine" evidence="1">
    <location>
        <position position="246"/>
    </location>
</feature>
<feature type="modified residue" description="Phosphoserine" evidence="1">
    <location>
        <position position="247"/>
    </location>
</feature>
<feature type="modified residue" description="Phosphoserine" evidence="1">
    <location>
        <position position="249"/>
    </location>
</feature>
<feature type="modified residue" description="Phosphoserine" evidence="1">
    <location>
        <position position="261"/>
    </location>
</feature>
<feature type="modified residue" description="Phosphoserine" evidence="8 10 11">
    <location>
        <position position="268"/>
    </location>
</feature>
<feature type="modified residue" description="Phosphoserine" evidence="11">
    <location>
        <position position="306"/>
    </location>
</feature>
<feature type="modified residue" description="Phosphoserine" evidence="1">
    <location>
        <position position="313"/>
    </location>
</feature>
<feature type="cross-link" description="Glycyl lysine isopeptide (Lys-Gly) (interchain with G-Cter in SUMO2)" evidence="1">
    <location>
        <position position="8"/>
    </location>
</feature>
<feature type="cross-link" description="Glycyl lysine isopeptide (Lys-Gly) (interchain with G-Cter in SUMO2)" evidence="1">
    <location>
        <position position="50"/>
    </location>
</feature>
<feature type="cross-link" description="Glycyl lysine isopeptide (Lys-Gly) (interchain with G-Cter in SUMO2)" evidence="1">
    <location>
        <position position="89"/>
    </location>
</feature>
<feature type="cross-link" description="Glycyl lysine isopeptide (Lys-Gly) (interchain with G-Cter in SUMO2)" evidence="1">
    <location>
        <position position="94"/>
    </location>
</feature>
<feature type="cross-link" description="Glycyl lysine isopeptide (Lys-Gly) (interchain with G-Cter in SUMO2); alternate" evidence="1">
    <location>
        <position position="176"/>
    </location>
</feature>
<feature type="cross-link" description="Glycyl lysine isopeptide (Lys-Gly) (interchain with G-Cter in SUMO2)" evidence="1">
    <location>
        <position position="224"/>
    </location>
</feature>
<feature type="cross-link" description="Glycyl lysine isopeptide (Lys-Gly) (interchain with G-Cter in SUMO2)" evidence="1">
    <location>
        <position position="237"/>
    </location>
</feature>
<feature type="cross-link" description="Glycyl lysine isopeptide (Lys-Gly) (interchain with G-Cter in SUMO1); alternate" evidence="1">
    <location>
        <position position="240"/>
    </location>
</feature>
<feature type="cross-link" description="Glycyl lysine isopeptide (Lys-Gly) (interchain with G-Cter in SUMO2); alternate" evidence="1">
    <location>
        <position position="240"/>
    </location>
</feature>
<feature type="cross-link" description="Glycyl lysine isopeptide (Lys-Gly) (interchain with G-Cter in SUMO2)" evidence="1">
    <location>
        <position position="251"/>
    </location>
</feature>
<feature type="cross-link" description="Glycyl lysine isopeptide (Lys-Gly) (interchain with G-Cter in SUMO2)" evidence="1">
    <location>
        <position position="252"/>
    </location>
</feature>
<feature type="cross-link" description="Glycyl lysine isopeptide (Lys-Gly) (interchain with G-Cter in SUMO); alternate" evidence="1">
    <location>
        <position position="258"/>
    </location>
</feature>
<feature type="cross-link" description="Glycyl lysine isopeptide (Lys-Gly) (interchain with G-Cter in SUMO2); alternate" evidence="1">
    <location>
        <position position="258"/>
    </location>
</feature>
<feature type="splice variant" id="VSP_005832" description="In isoform C1, isoform 3 and isoform 4." evidence="5 6">
    <location>
        <begin position="108"/>
        <end position="120"/>
    </location>
</feature>
<feature type="splice variant" id="VSP_019227" description="In isoform 4." evidence="5">
    <location>
        <begin position="227"/>
        <end position="234"/>
    </location>
</feature>
<feature type="splice variant" id="VSP_005833" description="In isoform 3 and isoform 5." evidence="6">
    <location>
        <begin position="227"/>
        <end position="233"/>
    </location>
</feature>
<feature type="sequence conflict" description="In Ref. 3; AAH04706." evidence="7" ref="3">
    <original>C</original>
    <variation>R</variation>
    <location>
        <position position="46"/>
    </location>
</feature>
<reference key="1">
    <citation type="journal article" date="2000" name="Mol. Cell. Biol.">
        <title>hnRNP C is required for postimplantation mouse development but is dispensable for cell viability.</title>
        <authorList>
            <person name="Williamson D.J."/>
            <person name="Banik-Maiti S."/>
            <person name="DeGregori J."/>
            <person name="Ruley H.E."/>
        </authorList>
    </citation>
    <scope>NUCLEOTIDE SEQUENCE [GENOMIC DNA / MRNA] (ISOFORM C2)</scope>
</reference>
<reference key="2">
    <citation type="journal article" date="2005" name="Science">
        <title>The transcriptional landscape of the mammalian genome.</title>
        <authorList>
            <person name="Carninci P."/>
            <person name="Kasukawa T."/>
            <person name="Katayama S."/>
            <person name="Gough J."/>
            <person name="Frith M.C."/>
            <person name="Maeda N."/>
            <person name="Oyama R."/>
            <person name="Ravasi T."/>
            <person name="Lenhard B."/>
            <person name="Wells C."/>
            <person name="Kodzius R."/>
            <person name="Shimokawa K."/>
            <person name="Bajic V.B."/>
            <person name="Brenner S.E."/>
            <person name="Batalov S."/>
            <person name="Forrest A.R."/>
            <person name="Zavolan M."/>
            <person name="Davis M.J."/>
            <person name="Wilming L.G."/>
            <person name="Aidinis V."/>
            <person name="Allen J.E."/>
            <person name="Ambesi-Impiombato A."/>
            <person name="Apweiler R."/>
            <person name="Aturaliya R.N."/>
            <person name="Bailey T.L."/>
            <person name="Bansal M."/>
            <person name="Baxter L."/>
            <person name="Beisel K.W."/>
            <person name="Bersano T."/>
            <person name="Bono H."/>
            <person name="Chalk A.M."/>
            <person name="Chiu K.P."/>
            <person name="Choudhary V."/>
            <person name="Christoffels A."/>
            <person name="Clutterbuck D.R."/>
            <person name="Crowe M.L."/>
            <person name="Dalla E."/>
            <person name="Dalrymple B.P."/>
            <person name="de Bono B."/>
            <person name="Della Gatta G."/>
            <person name="di Bernardo D."/>
            <person name="Down T."/>
            <person name="Engstrom P."/>
            <person name="Fagiolini M."/>
            <person name="Faulkner G."/>
            <person name="Fletcher C.F."/>
            <person name="Fukushima T."/>
            <person name="Furuno M."/>
            <person name="Futaki S."/>
            <person name="Gariboldi M."/>
            <person name="Georgii-Hemming P."/>
            <person name="Gingeras T.R."/>
            <person name="Gojobori T."/>
            <person name="Green R.E."/>
            <person name="Gustincich S."/>
            <person name="Harbers M."/>
            <person name="Hayashi Y."/>
            <person name="Hensch T.K."/>
            <person name="Hirokawa N."/>
            <person name="Hill D."/>
            <person name="Huminiecki L."/>
            <person name="Iacono M."/>
            <person name="Ikeo K."/>
            <person name="Iwama A."/>
            <person name="Ishikawa T."/>
            <person name="Jakt M."/>
            <person name="Kanapin A."/>
            <person name="Katoh M."/>
            <person name="Kawasawa Y."/>
            <person name="Kelso J."/>
            <person name="Kitamura H."/>
            <person name="Kitano H."/>
            <person name="Kollias G."/>
            <person name="Krishnan S.P."/>
            <person name="Kruger A."/>
            <person name="Kummerfeld S.K."/>
            <person name="Kurochkin I.V."/>
            <person name="Lareau L.F."/>
            <person name="Lazarevic D."/>
            <person name="Lipovich L."/>
            <person name="Liu J."/>
            <person name="Liuni S."/>
            <person name="McWilliam S."/>
            <person name="Madan Babu M."/>
            <person name="Madera M."/>
            <person name="Marchionni L."/>
            <person name="Matsuda H."/>
            <person name="Matsuzawa S."/>
            <person name="Miki H."/>
            <person name="Mignone F."/>
            <person name="Miyake S."/>
            <person name="Morris K."/>
            <person name="Mottagui-Tabar S."/>
            <person name="Mulder N."/>
            <person name="Nakano N."/>
            <person name="Nakauchi H."/>
            <person name="Ng P."/>
            <person name="Nilsson R."/>
            <person name="Nishiguchi S."/>
            <person name="Nishikawa S."/>
            <person name="Nori F."/>
            <person name="Ohara O."/>
            <person name="Okazaki Y."/>
            <person name="Orlando V."/>
            <person name="Pang K.C."/>
            <person name="Pavan W.J."/>
            <person name="Pavesi G."/>
            <person name="Pesole G."/>
            <person name="Petrovsky N."/>
            <person name="Piazza S."/>
            <person name="Reed J."/>
            <person name="Reid J.F."/>
            <person name="Ring B.Z."/>
            <person name="Ringwald M."/>
            <person name="Rost B."/>
            <person name="Ruan Y."/>
            <person name="Salzberg S.L."/>
            <person name="Sandelin A."/>
            <person name="Schneider C."/>
            <person name="Schoenbach C."/>
            <person name="Sekiguchi K."/>
            <person name="Semple C.A."/>
            <person name="Seno S."/>
            <person name="Sessa L."/>
            <person name="Sheng Y."/>
            <person name="Shibata Y."/>
            <person name="Shimada H."/>
            <person name="Shimada K."/>
            <person name="Silva D."/>
            <person name="Sinclair B."/>
            <person name="Sperling S."/>
            <person name="Stupka E."/>
            <person name="Sugiura K."/>
            <person name="Sultana R."/>
            <person name="Takenaka Y."/>
            <person name="Taki K."/>
            <person name="Tammoja K."/>
            <person name="Tan S.L."/>
            <person name="Tang S."/>
            <person name="Taylor M.S."/>
            <person name="Tegner J."/>
            <person name="Teichmann S.A."/>
            <person name="Ueda H.R."/>
            <person name="van Nimwegen E."/>
            <person name="Verardo R."/>
            <person name="Wei C.L."/>
            <person name="Yagi K."/>
            <person name="Yamanishi H."/>
            <person name="Zabarovsky E."/>
            <person name="Zhu S."/>
            <person name="Zimmer A."/>
            <person name="Hide W."/>
            <person name="Bult C."/>
            <person name="Grimmond S.M."/>
            <person name="Teasdale R.D."/>
            <person name="Liu E.T."/>
            <person name="Brusic V."/>
            <person name="Quackenbush J."/>
            <person name="Wahlestedt C."/>
            <person name="Mattick J.S."/>
            <person name="Hume D.A."/>
            <person name="Kai C."/>
            <person name="Sasaki D."/>
            <person name="Tomaru Y."/>
            <person name="Fukuda S."/>
            <person name="Kanamori-Katayama M."/>
            <person name="Suzuki M."/>
            <person name="Aoki J."/>
            <person name="Arakawa T."/>
            <person name="Iida J."/>
            <person name="Imamura K."/>
            <person name="Itoh M."/>
            <person name="Kato T."/>
            <person name="Kawaji H."/>
            <person name="Kawagashira N."/>
            <person name="Kawashima T."/>
            <person name="Kojima M."/>
            <person name="Kondo S."/>
            <person name="Konno H."/>
            <person name="Nakano K."/>
            <person name="Ninomiya N."/>
            <person name="Nishio T."/>
            <person name="Okada M."/>
            <person name="Plessy C."/>
            <person name="Shibata K."/>
            <person name="Shiraki T."/>
            <person name="Suzuki S."/>
            <person name="Tagami M."/>
            <person name="Waki K."/>
            <person name="Watahiki A."/>
            <person name="Okamura-Oho Y."/>
            <person name="Suzuki H."/>
            <person name="Kawai J."/>
            <person name="Hayashizaki Y."/>
        </authorList>
    </citation>
    <scope>NUCLEOTIDE SEQUENCE [LARGE SCALE MRNA] (ISOFORMS C1; C2; 3 AND 5)</scope>
    <source>
        <strain>C57BL/6J</strain>
        <strain>NOD</strain>
        <tissue>Colon</tissue>
        <tissue>Embryo</tissue>
        <tissue>Thymus</tissue>
    </source>
</reference>
<reference key="3">
    <citation type="journal article" date="2004" name="Genome Res.">
        <title>The status, quality, and expansion of the NIH full-length cDNA project: the Mammalian Gene Collection (MGC).</title>
        <authorList>
            <consortium name="The MGC Project Team"/>
        </authorList>
    </citation>
    <scope>NUCLEOTIDE SEQUENCE [LARGE SCALE MRNA] (ISOFORMS C1 AND 4)</scope>
    <source>
        <strain>FVB/N</strain>
        <tissue>Mammary gland</tissue>
    </source>
</reference>
<reference key="4">
    <citation type="submission" date="2007-07" db="UniProtKB">
        <authorList>
            <person name="Lubec G."/>
            <person name="Yang J.W."/>
            <person name="Zigmond M."/>
        </authorList>
    </citation>
    <scope>PROTEIN SEQUENCE OF 51-61</scope>
    <source>
        <tissue>Brain</tissue>
    </source>
</reference>
<reference key="5">
    <citation type="journal article" date="2004" name="Mol. Cell. Proteomics">
        <title>Phosphoproteomic analysis of the developing mouse brain.</title>
        <authorList>
            <person name="Ballif B.A."/>
            <person name="Villen J."/>
            <person name="Beausoleil S.A."/>
            <person name="Schwartz D."/>
            <person name="Gygi S.P."/>
        </authorList>
    </citation>
    <scope>PHOSPHORYLATION [LARGE SCALE ANALYSIS] AT SER-268</scope>
    <scope>IDENTIFICATION BY MASS SPECTROMETRY [LARGE SCALE ANALYSIS]</scope>
    <source>
        <tissue>Embryonic brain</tissue>
    </source>
</reference>
<reference key="6">
    <citation type="journal article" date="2007" name="Proc. Natl. Acad. Sci. U.S.A.">
        <title>Large-scale phosphorylation analysis of mouse liver.</title>
        <authorList>
            <person name="Villen J."/>
            <person name="Beausoleil S.A."/>
            <person name="Gerber S.A."/>
            <person name="Gygi S.P."/>
        </authorList>
    </citation>
    <scope>PHOSPHORYLATION [LARGE SCALE ANALYSIS] AT SER-231</scope>
    <scope>IDENTIFICATION BY MASS SPECTROMETRY [LARGE SCALE ANALYSIS]</scope>
    <source>
        <tissue>Liver</tissue>
    </source>
</reference>
<reference key="7">
    <citation type="journal article" date="2009" name="Immunity">
        <title>The phagosomal proteome in interferon-gamma-activated macrophages.</title>
        <authorList>
            <person name="Trost M."/>
            <person name="English L."/>
            <person name="Lemieux S."/>
            <person name="Courcelles M."/>
            <person name="Desjardins M."/>
            <person name="Thibault P."/>
        </authorList>
    </citation>
    <scope>PHOSPHORYLATION [LARGE SCALE ANALYSIS] AT SER-241 AND SER-268</scope>
    <scope>IDENTIFICATION BY MASS SPECTROMETRY [LARGE SCALE ANALYSIS]</scope>
</reference>
<reference key="8">
    <citation type="journal article" date="2010" name="Cell">
        <title>A tissue-specific atlas of mouse protein phosphorylation and expression.</title>
        <authorList>
            <person name="Huttlin E.L."/>
            <person name="Jedrychowski M.P."/>
            <person name="Elias J.E."/>
            <person name="Goswami T."/>
            <person name="Rad R."/>
            <person name="Beausoleil S.A."/>
            <person name="Villen J."/>
            <person name="Haas W."/>
            <person name="Sowa M.E."/>
            <person name="Gygi S.P."/>
        </authorList>
    </citation>
    <scope>PHOSPHORYLATION [LARGE SCALE ANALYSIS] AT SER-121; SER-229; SER-232; SER-241; SER-268 AND SER-306</scope>
    <scope>IDENTIFICATION BY MASS SPECTROMETRY [LARGE SCALE ANALYSIS]</scope>
    <source>
        <tissue>Brain</tissue>
        <tissue>Brown adipose tissue</tissue>
        <tissue>Heart</tissue>
        <tissue>Kidney</tissue>
        <tissue>Liver</tissue>
        <tissue>Lung</tissue>
        <tissue>Pancreas</tissue>
        <tissue>Spleen</tissue>
        <tissue>Testis</tissue>
    </source>
</reference>
<reference key="9">
    <citation type="journal article" date="2013" name="Mol. Cell">
        <title>SIRT5-mediated lysine desuccinylation impacts diverse metabolic pathways.</title>
        <authorList>
            <person name="Park J."/>
            <person name="Chen Y."/>
            <person name="Tishkoff D.X."/>
            <person name="Peng C."/>
            <person name="Tan M."/>
            <person name="Dai L."/>
            <person name="Xie Z."/>
            <person name="Zhang Y."/>
            <person name="Zwaans B.M."/>
            <person name="Skinner M.E."/>
            <person name="Lombard D.B."/>
            <person name="Zhao Y."/>
        </authorList>
    </citation>
    <scope>ACETYLATION [LARGE SCALE ANALYSIS] AT LYS-176</scope>
    <scope>IDENTIFICATION BY MASS SPECTROMETRY [LARGE SCALE ANALYSIS]</scope>
    <source>
        <tissue>Embryonic fibroblast</tissue>
    </source>
</reference>
<dbReference type="EMBL" id="AF095257">
    <property type="protein sequence ID" value="AAD03717.1"/>
    <property type="molecule type" value="mRNA"/>
</dbReference>
<dbReference type="EMBL" id="AF095258">
    <property type="protein sequence ID" value="AAD19892.1"/>
    <property type="molecule type" value="Genomic_DNA"/>
</dbReference>
<dbReference type="EMBL" id="AK011336">
    <property type="protein sequence ID" value="BAB27553.1"/>
    <property type="molecule type" value="mRNA"/>
</dbReference>
<dbReference type="EMBL" id="AK012633">
    <property type="protein sequence ID" value="BAB28370.1"/>
    <property type="molecule type" value="mRNA"/>
</dbReference>
<dbReference type="EMBL" id="AK019958">
    <property type="protein sequence ID" value="BAB31934.1"/>
    <property type="molecule type" value="mRNA"/>
</dbReference>
<dbReference type="EMBL" id="AK088245">
    <property type="protein sequence ID" value="BAC40233.1"/>
    <property type="molecule type" value="mRNA"/>
</dbReference>
<dbReference type="EMBL" id="AK088678">
    <property type="protein sequence ID" value="BAC40499.1"/>
    <property type="molecule type" value="mRNA"/>
</dbReference>
<dbReference type="EMBL" id="AK089061">
    <property type="protein sequence ID" value="BAC40728.1"/>
    <property type="molecule type" value="mRNA"/>
</dbReference>
<dbReference type="EMBL" id="AK166590">
    <property type="protein sequence ID" value="BAE38877.1"/>
    <property type="molecule type" value="mRNA"/>
</dbReference>
<dbReference type="EMBL" id="AK168802">
    <property type="protein sequence ID" value="BAE40632.1"/>
    <property type="molecule type" value="mRNA"/>
</dbReference>
<dbReference type="EMBL" id="BC004706">
    <property type="protein sequence ID" value="AAH04706.1"/>
    <property type="molecule type" value="mRNA"/>
</dbReference>
<dbReference type="EMBL" id="BC095922">
    <property type="protein sequence ID" value="AAH95922.1"/>
    <property type="molecule type" value="mRNA"/>
</dbReference>
<dbReference type="CCDS" id="CCDS36917.1">
    <molecule id="Q9Z204-1"/>
</dbReference>
<dbReference type="CCDS" id="CCDS88659.1">
    <molecule id="Q9Z204-5"/>
</dbReference>
<dbReference type="CCDS" id="CCDS88660.1">
    <molecule id="Q9Z204-4"/>
</dbReference>
<dbReference type="CCDS" id="CCDS88661.1">
    <molecule id="Q9Z204-3"/>
</dbReference>
<dbReference type="CCDS" id="CCDS88662.1">
    <molecule id="Q9Z204-2"/>
</dbReference>
<dbReference type="RefSeq" id="NP_001164452.1">
    <molecule id="Q9Z204-2"/>
    <property type="nucleotide sequence ID" value="NM_001170981.3"/>
</dbReference>
<dbReference type="RefSeq" id="NP_001164453.1">
    <molecule id="Q9Z204-2"/>
    <property type="nucleotide sequence ID" value="NM_001170982.3"/>
</dbReference>
<dbReference type="RefSeq" id="NP_001164454.1">
    <molecule id="Q9Z204-3"/>
    <property type="nucleotide sequence ID" value="NM_001170983.3"/>
</dbReference>
<dbReference type="RefSeq" id="NP_001164455.1">
    <molecule id="Q9Z204-4"/>
    <property type="nucleotide sequence ID" value="NM_001170984.3"/>
</dbReference>
<dbReference type="RefSeq" id="NP_001347101.1">
    <molecule id="Q9Z204-1"/>
    <property type="nucleotide sequence ID" value="NM_001360172.2"/>
</dbReference>
<dbReference type="RefSeq" id="NP_001347102.1">
    <molecule id="Q9Z204-1"/>
    <property type="nucleotide sequence ID" value="NM_001360173.2"/>
</dbReference>
<dbReference type="RefSeq" id="NP_001347103.1">
    <molecule id="Q9Z204-5"/>
    <property type="nucleotide sequence ID" value="NM_001360174.2"/>
</dbReference>
<dbReference type="RefSeq" id="NP_001347104.1">
    <molecule id="Q9Z204-5"/>
    <property type="nucleotide sequence ID" value="NM_001360175.2"/>
</dbReference>
<dbReference type="RefSeq" id="NP_001347108.1">
    <molecule id="Q9Z204-2"/>
    <property type="nucleotide sequence ID" value="NM_001360179.2"/>
</dbReference>
<dbReference type="RefSeq" id="NP_001347109.1">
    <molecule id="Q9Z204-3"/>
    <property type="nucleotide sequence ID" value="NM_001360180.2"/>
</dbReference>
<dbReference type="RefSeq" id="NP_001347110.1">
    <molecule id="Q9Z204-3"/>
    <property type="nucleotide sequence ID" value="NM_001360181.2"/>
</dbReference>
<dbReference type="RefSeq" id="NP_001347111.1">
    <molecule id="Q9Z204-3"/>
    <property type="nucleotide sequence ID" value="NM_001360182.2"/>
</dbReference>
<dbReference type="RefSeq" id="NP_001347112.1">
    <molecule id="Q9Z204-4"/>
    <property type="nucleotide sequence ID" value="NM_001360183.2"/>
</dbReference>
<dbReference type="RefSeq" id="NP_001347113.1">
    <molecule id="Q9Z204-4"/>
    <property type="nucleotide sequence ID" value="NM_001360184.2"/>
</dbReference>
<dbReference type="RefSeq" id="NP_001411404.1">
    <molecule id="Q9Z204-4"/>
    <property type="nucleotide sequence ID" value="NM_001424475.1"/>
</dbReference>
<dbReference type="RefSeq" id="NP_001411405.1">
    <molecule id="Q9Z204-2"/>
    <property type="nucleotide sequence ID" value="NM_001424476.1"/>
</dbReference>
<dbReference type="RefSeq" id="NP_001411406.1">
    <molecule id="Q9Z204-5"/>
    <property type="nucleotide sequence ID" value="NM_001424477.1"/>
</dbReference>
<dbReference type="RefSeq" id="NP_001411407.1">
    <molecule id="Q9Z204-1"/>
    <property type="nucleotide sequence ID" value="NM_001424478.1"/>
</dbReference>
<dbReference type="RefSeq" id="NP_001411408.1">
    <molecule id="Q9Z204-4"/>
    <property type="nucleotide sequence ID" value="NM_001424479.1"/>
</dbReference>
<dbReference type="RefSeq" id="NP_001411409.1">
    <molecule id="Q9Z204-2"/>
    <property type="nucleotide sequence ID" value="NM_001424480.1"/>
</dbReference>
<dbReference type="RefSeq" id="NP_001411411.1">
    <molecule id="Q9Z204-5"/>
    <property type="nucleotide sequence ID" value="NM_001424482.1"/>
</dbReference>
<dbReference type="RefSeq" id="NP_058580.1">
    <molecule id="Q9Z204-1"/>
    <property type="nucleotide sequence ID" value="NM_016884.5"/>
</dbReference>
<dbReference type="RefSeq" id="XP_006518634.1">
    <property type="nucleotide sequence ID" value="XM_006518571.3"/>
</dbReference>
<dbReference type="RefSeq" id="XP_006518635.1">
    <property type="nucleotide sequence ID" value="XM_006518572.3"/>
</dbReference>
<dbReference type="RefSeq" id="XP_006518637.1">
    <property type="nucleotide sequence ID" value="XM_006518574.2"/>
</dbReference>
<dbReference type="RefSeq" id="XP_006518641.1">
    <property type="nucleotide sequence ID" value="XM_006518578.2"/>
</dbReference>
<dbReference type="RefSeq" id="XP_006518644.1">
    <property type="nucleotide sequence ID" value="XM_006518581.2"/>
</dbReference>
<dbReference type="RefSeq" id="XP_017171338.1">
    <property type="nucleotide sequence ID" value="XM_017315849.1"/>
</dbReference>
<dbReference type="RefSeq" id="XP_017171339.1">
    <property type="nucleotide sequence ID" value="XM_017315850.1"/>
</dbReference>
<dbReference type="RefSeq" id="XP_017171340.1">
    <property type="nucleotide sequence ID" value="XM_017315851.1"/>
</dbReference>
<dbReference type="RefSeq" id="XP_017171344.1">
    <property type="nucleotide sequence ID" value="XM_017315855.1"/>
</dbReference>
<dbReference type="RefSeq" id="XP_017171345.1">
    <property type="nucleotide sequence ID" value="XM_017315856.1"/>
</dbReference>
<dbReference type="RefSeq" id="XP_017171346.1">
    <property type="nucleotide sequence ID" value="XM_017315857.1"/>
</dbReference>
<dbReference type="RefSeq" id="XP_017171347.1">
    <property type="nucleotide sequence ID" value="XM_017315858.1"/>
</dbReference>
<dbReference type="RefSeq" id="XP_017171348.1">
    <property type="nucleotide sequence ID" value="XM_017315859.1"/>
</dbReference>
<dbReference type="RefSeq" id="XP_036014360.1">
    <molecule id="Q9Z204-1"/>
    <property type="nucleotide sequence ID" value="XM_036158467.1"/>
</dbReference>
<dbReference type="BMRB" id="Q9Z204"/>
<dbReference type="SMR" id="Q9Z204"/>
<dbReference type="BioGRID" id="200356">
    <property type="interactions" value="44"/>
</dbReference>
<dbReference type="DIP" id="DIP-59747N"/>
<dbReference type="FunCoup" id="Q9Z204">
    <property type="interactions" value="3628"/>
</dbReference>
<dbReference type="IntAct" id="Q9Z204">
    <property type="interactions" value="6"/>
</dbReference>
<dbReference type="MINT" id="Q9Z204"/>
<dbReference type="STRING" id="10090.ENSMUSP00000107237"/>
<dbReference type="ChEMBL" id="CHEMBL4879526"/>
<dbReference type="GlyGen" id="Q9Z204">
    <property type="glycosylation" value="2 sites, 1 N-linked glycan (1 site), 1 O-linked glycan (1 site)"/>
</dbReference>
<dbReference type="iPTMnet" id="Q9Z204"/>
<dbReference type="PhosphoSitePlus" id="Q9Z204"/>
<dbReference type="SwissPalm" id="Q9Z204"/>
<dbReference type="jPOST" id="Q9Z204"/>
<dbReference type="PaxDb" id="10090-ENSMUSP00000107237"/>
<dbReference type="PeptideAtlas" id="Q9Z204"/>
<dbReference type="ProteomicsDB" id="273307">
    <molecule id="Q9Z204-1"/>
</dbReference>
<dbReference type="ProteomicsDB" id="273308">
    <molecule id="Q9Z204-2"/>
</dbReference>
<dbReference type="ProteomicsDB" id="273309">
    <molecule id="Q9Z204-3"/>
</dbReference>
<dbReference type="ProteomicsDB" id="273310">
    <molecule id="Q9Z204-4"/>
</dbReference>
<dbReference type="ProteomicsDB" id="273311">
    <molecule id="Q9Z204-5"/>
</dbReference>
<dbReference type="Pumba" id="Q9Z204"/>
<dbReference type="TopDownProteomics" id="Q9Z204-1">
    <molecule id="Q9Z204-1"/>
</dbReference>
<dbReference type="TopDownProteomics" id="Q9Z204-4">
    <molecule id="Q9Z204-4"/>
</dbReference>
<dbReference type="DNASU" id="15381"/>
<dbReference type="Ensembl" id="ENSMUST00000111610.12">
    <molecule id="Q9Z204-1"/>
    <property type="protein sequence ID" value="ENSMUSP00000107237.5"/>
    <property type="gene ID" value="ENSMUSG00000060373.17"/>
</dbReference>
<dbReference type="Ensembl" id="ENSMUST00000227242.2">
    <molecule id="Q9Z204-2"/>
    <property type="protein sequence ID" value="ENSMUSP00000154757.2"/>
    <property type="gene ID" value="ENSMUSG00000060373.17"/>
</dbReference>
<dbReference type="Ensembl" id="ENSMUST00000227458.2">
    <molecule id="Q9Z204-4"/>
    <property type="protein sequence ID" value="ENSMUSP00000154238.2"/>
    <property type="gene ID" value="ENSMUSG00000060373.17"/>
</dbReference>
<dbReference type="Ensembl" id="ENSMUST00000227536.2">
    <molecule id="Q9Z204-2"/>
    <property type="protein sequence ID" value="ENSMUSP00000154737.2"/>
    <property type="gene ID" value="ENSMUSG00000060373.17"/>
</dbReference>
<dbReference type="Ensembl" id="ENSMUST00000228198.2">
    <molecule id="Q9Z204-5"/>
    <property type="protein sequence ID" value="ENSMUSP00000154212.2"/>
    <property type="gene ID" value="ENSMUSG00000060373.17"/>
</dbReference>
<dbReference type="Ensembl" id="ENSMUST00000228232.2">
    <molecule id="Q9Z204-3"/>
    <property type="protein sequence ID" value="ENSMUSP00000154619.2"/>
    <property type="gene ID" value="ENSMUSG00000060373.17"/>
</dbReference>
<dbReference type="Ensembl" id="ENSMUST00000228748.2">
    <molecule id="Q9Z204-3"/>
    <property type="protein sequence ID" value="ENSMUSP00000154166.2"/>
    <property type="gene ID" value="ENSMUSG00000060373.17"/>
</dbReference>
<dbReference type="GeneID" id="15381"/>
<dbReference type="KEGG" id="mmu:15381"/>
<dbReference type="UCSC" id="uc007tob.2">
    <molecule id="Q9Z204-1"/>
    <property type="organism name" value="mouse"/>
</dbReference>
<dbReference type="UCSC" id="uc007toc.2">
    <molecule id="Q9Z204-4"/>
    <property type="organism name" value="mouse"/>
</dbReference>
<dbReference type="UCSC" id="uc007tod.2">
    <molecule id="Q9Z204-2"/>
    <property type="organism name" value="mouse"/>
</dbReference>
<dbReference type="UCSC" id="uc007toe.2">
    <molecule id="Q9Z204-3"/>
    <property type="organism name" value="mouse"/>
</dbReference>
<dbReference type="UCSC" id="uc007tof.2">
    <molecule id="Q9Z204-5"/>
    <property type="organism name" value="mouse"/>
</dbReference>
<dbReference type="AGR" id="MGI:107795"/>
<dbReference type="CTD" id="3183"/>
<dbReference type="MGI" id="MGI:107795">
    <property type="gene designation" value="Hnrnpc"/>
</dbReference>
<dbReference type="VEuPathDB" id="HostDB:ENSMUSG00000060373"/>
<dbReference type="eggNOG" id="KOG0118">
    <property type="taxonomic scope" value="Eukaryota"/>
</dbReference>
<dbReference type="GeneTree" id="ENSGT00940000153402"/>
<dbReference type="HOGENOM" id="CLU_079090_0_0_1"/>
<dbReference type="InParanoid" id="Q9Z204"/>
<dbReference type="OMA" id="RRIFFET"/>
<dbReference type="OrthoDB" id="6730379at2759"/>
<dbReference type="PhylomeDB" id="Q9Z204"/>
<dbReference type="TreeFam" id="TF330974"/>
<dbReference type="Reactome" id="R-MMU-4570464">
    <property type="pathway name" value="SUMOylation of RNA binding proteins"/>
</dbReference>
<dbReference type="Reactome" id="R-MMU-72163">
    <property type="pathway name" value="mRNA Splicing - Major Pathway"/>
</dbReference>
<dbReference type="Reactome" id="R-MMU-72203">
    <property type="pathway name" value="Processing of Capped Intron-Containing Pre-mRNA"/>
</dbReference>
<dbReference type="Reactome" id="R-MMU-9013418">
    <property type="pathway name" value="RHOBTB2 GTPase cycle"/>
</dbReference>
<dbReference type="Reactome" id="R-MMU-9013422">
    <property type="pathway name" value="RHOBTB1 GTPase cycle"/>
</dbReference>
<dbReference type="BioGRID-ORCS" id="15381">
    <property type="hits" value="20 hits in 78 CRISPR screens"/>
</dbReference>
<dbReference type="ChiTaRS" id="Hnrnpc">
    <property type="organism name" value="mouse"/>
</dbReference>
<dbReference type="PRO" id="PR:Q9Z204"/>
<dbReference type="Proteomes" id="UP000000589">
    <property type="component" value="Chromosome 14"/>
</dbReference>
<dbReference type="RNAct" id="Q9Z204">
    <property type="molecule type" value="protein"/>
</dbReference>
<dbReference type="Bgee" id="ENSMUSG00000060373">
    <property type="expression patterns" value="Expressed in primitive streak and 259 other cell types or tissues"/>
</dbReference>
<dbReference type="ExpressionAtlas" id="Q9Z204">
    <property type="expression patterns" value="baseline and differential"/>
</dbReference>
<dbReference type="GO" id="GO:0015629">
    <property type="term" value="C:actin cytoskeleton"/>
    <property type="evidence" value="ECO:0000250"/>
    <property type="project" value="UniProtKB"/>
</dbReference>
<dbReference type="GO" id="GO:0005634">
    <property type="term" value="C:nucleus"/>
    <property type="evidence" value="ECO:0000314"/>
    <property type="project" value="MGI"/>
</dbReference>
<dbReference type="GO" id="GO:0045120">
    <property type="term" value="C:pronucleus"/>
    <property type="evidence" value="ECO:0000314"/>
    <property type="project" value="MGI"/>
</dbReference>
<dbReference type="GO" id="GO:0032991">
    <property type="term" value="C:protein-containing complex"/>
    <property type="evidence" value="ECO:0000250"/>
    <property type="project" value="UniProtKB"/>
</dbReference>
<dbReference type="GO" id="GO:0005681">
    <property type="term" value="C:spliceosomal complex"/>
    <property type="evidence" value="ECO:0000250"/>
    <property type="project" value="HGNC-UCL"/>
</dbReference>
<dbReference type="GO" id="GO:0003729">
    <property type="term" value="F:mRNA binding"/>
    <property type="evidence" value="ECO:0000314"/>
    <property type="project" value="MGI"/>
</dbReference>
<dbReference type="GO" id="GO:1990247">
    <property type="term" value="F:N6-methyladenosine-containing RNA reader activity"/>
    <property type="evidence" value="ECO:0000250"/>
    <property type="project" value="UniProtKB"/>
</dbReference>
<dbReference type="GO" id="GO:0000398">
    <property type="term" value="P:mRNA splicing, via spliceosome"/>
    <property type="evidence" value="ECO:0000250"/>
    <property type="project" value="UniProtKB"/>
</dbReference>
<dbReference type="CDD" id="cd12603">
    <property type="entry name" value="RRM_hnRNPC"/>
    <property type="match status" value="1"/>
</dbReference>
<dbReference type="FunFam" id="3.30.70.330:FF:000019">
    <property type="entry name" value="heterogeneous nuclear ribonucleoproteins C1/C2 isoform X1"/>
    <property type="match status" value="1"/>
</dbReference>
<dbReference type="Gene3D" id="3.30.70.330">
    <property type="match status" value="1"/>
</dbReference>
<dbReference type="InterPro" id="IPR017347">
    <property type="entry name" value="hnRNP_C"/>
</dbReference>
<dbReference type="InterPro" id="IPR012677">
    <property type="entry name" value="Nucleotide-bd_a/b_plait_sf"/>
</dbReference>
<dbReference type="InterPro" id="IPR035979">
    <property type="entry name" value="RBD_domain_sf"/>
</dbReference>
<dbReference type="InterPro" id="IPR000504">
    <property type="entry name" value="RRM_dom"/>
</dbReference>
<dbReference type="InterPro" id="IPR051186">
    <property type="entry name" value="RRM_HNRPC/RALY_subfam"/>
</dbReference>
<dbReference type="PANTHER" id="PTHR13968">
    <property type="entry name" value="HETEROGENEOUS NUCLEAR RIBONUCLEOPROTEIN"/>
    <property type="match status" value="1"/>
</dbReference>
<dbReference type="PANTHER" id="PTHR13968:SF3">
    <property type="entry name" value="HETEROGENEOUS NUCLEAR RIBONUCLEOPROTEINS C1_C2"/>
    <property type="match status" value="1"/>
</dbReference>
<dbReference type="Pfam" id="PF00076">
    <property type="entry name" value="RRM_1"/>
    <property type="match status" value="1"/>
</dbReference>
<dbReference type="PIRSF" id="PIRSF037992">
    <property type="entry name" value="hnRNP-C_Raly"/>
    <property type="match status" value="1"/>
</dbReference>
<dbReference type="SMART" id="SM00360">
    <property type="entry name" value="RRM"/>
    <property type="match status" value="1"/>
</dbReference>
<dbReference type="SUPFAM" id="SSF54928">
    <property type="entry name" value="RNA-binding domain, RBD"/>
    <property type="match status" value="1"/>
</dbReference>
<dbReference type="PROSITE" id="PS50102">
    <property type="entry name" value="RRM"/>
    <property type="match status" value="1"/>
</dbReference>
<protein>
    <recommendedName>
        <fullName>Heterogeneous nuclear ribonucleoproteins C1/C2</fullName>
        <shortName>hnRNP C1/C2</shortName>
    </recommendedName>
</protein>
<name>HNRPC_MOUSE</name>
<sequence>MASNVTNKTDPRSMNSRVFIGNLNTLVVKKSDVEAIFSKYGKIVGCSVHKGFAFVQYVNERNARAAVAGEDGRMIAGQVLDINLAAEPKVNRGKAGVKRSAAEMYGSVPEHPSPSPLLSSSFDLDYDFQRDYYDRMYSYPARVPPPPPIARAVVPSKRQRVSGNTSRRGKSGFNSKSGQRGSSSKSGKLKGDDLQAIKKELTQIKQKVDSLLESLEKIEKEQSKQADLSFSSPVEMKNEKSEEEQSSASVKKDETNVKMESEAGADDSAEEGDLLDDDDNEDRGDDQLELKDDEKEPEEGEDDRDSANGEDDS</sequence>
<organism>
    <name type="scientific">Mus musculus</name>
    <name type="common">Mouse</name>
    <dbReference type="NCBI Taxonomy" id="10090"/>
    <lineage>
        <taxon>Eukaryota</taxon>
        <taxon>Metazoa</taxon>
        <taxon>Chordata</taxon>
        <taxon>Craniata</taxon>
        <taxon>Vertebrata</taxon>
        <taxon>Euteleostomi</taxon>
        <taxon>Mammalia</taxon>
        <taxon>Eutheria</taxon>
        <taxon>Euarchontoglires</taxon>
        <taxon>Glires</taxon>
        <taxon>Rodentia</taxon>
        <taxon>Myomorpha</taxon>
        <taxon>Muroidea</taxon>
        <taxon>Muridae</taxon>
        <taxon>Murinae</taxon>
        <taxon>Mus</taxon>
        <taxon>Mus</taxon>
    </lineage>
</organism>
<evidence type="ECO:0000250" key="1">
    <source>
        <dbReference type="UniProtKB" id="P07910"/>
    </source>
</evidence>
<evidence type="ECO:0000255" key="2"/>
<evidence type="ECO:0000255" key="3">
    <source>
        <dbReference type="PROSITE-ProRule" id="PRU00176"/>
    </source>
</evidence>
<evidence type="ECO:0000256" key="4">
    <source>
        <dbReference type="SAM" id="MobiDB-lite"/>
    </source>
</evidence>
<evidence type="ECO:0000303" key="5">
    <source>
    </source>
</evidence>
<evidence type="ECO:0000303" key="6">
    <source>
    </source>
</evidence>
<evidence type="ECO:0000305" key="7"/>
<evidence type="ECO:0007744" key="8">
    <source>
    </source>
</evidence>
<evidence type="ECO:0007744" key="9">
    <source>
    </source>
</evidence>
<evidence type="ECO:0007744" key="10">
    <source>
    </source>
</evidence>
<evidence type="ECO:0007744" key="11">
    <source>
    </source>
</evidence>
<evidence type="ECO:0007744" key="12">
    <source>
    </source>
</evidence>
<gene>
    <name type="primary">Hnrnpc</name>
    <name type="synonym">Hnrpc</name>
</gene>
<keyword id="KW-0007">Acetylation</keyword>
<keyword id="KW-0025">Alternative splicing</keyword>
<keyword id="KW-0175">Coiled coil</keyword>
<keyword id="KW-0903">Direct protein sequencing</keyword>
<keyword id="KW-1017">Isopeptide bond</keyword>
<keyword id="KW-0507">mRNA processing</keyword>
<keyword id="KW-0508">mRNA splicing</keyword>
<keyword id="KW-0539">Nucleus</keyword>
<keyword id="KW-0597">Phosphoprotein</keyword>
<keyword id="KW-1185">Reference proteome</keyword>
<keyword id="KW-0687">Ribonucleoprotein</keyword>
<keyword id="KW-0694">RNA-binding</keyword>
<keyword id="KW-0747">Spliceosome</keyword>
<keyword id="KW-0832">Ubl conjugation</keyword>